<evidence type="ECO:0000255" key="1">
    <source>
        <dbReference type="HAMAP-Rule" id="MF_01219"/>
    </source>
</evidence>
<proteinExistence type="inferred from homology"/>
<accession>Q8CXH9</accession>
<reference key="1">
    <citation type="journal article" date="2002" name="Nucleic Acids Res.">
        <title>Genome sequence of Oceanobacillus iheyensis isolated from the Iheya Ridge and its unexpected adaptive capabilities to extreme environments.</title>
        <authorList>
            <person name="Takami H."/>
            <person name="Takaki Y."/>
            <person name="Uchiyama I."/>
        </authorList>
    </citation>
    <scope>NUCLEOTIDE SEQUENCE [LARGE SCALE GENOMIC DNA]</scope>
    <source>
        <strain>DSM 14371 / CIP 107618 / JCM 11309 / KCTC 3954 / HTE831</strain>
    </source>
</reference>
<protein>
    <recommendedName>
        <fullName evidence="1">Bifunctional protein PyrR</fullName>
    </recommendedName>
    <domain>
        <recommendedName>
            <fullName evidence="1">Pyrimidine operon regulatory protein</fullName>
        </recommendedName>
    </domain>
    <domain>
        <recommendedName>
            <fullName evidence="1">Uracil phosphoribosyltransferase</fullName>
            <shortName evidence="1">UPRTase</shortName>
            <ecNumber evidence="1">2.4.2.9</ecNumber>
        </recommendedName>
    </domain>
</protein>
<keyword id="KW-0328">Glycosyltransferase</keyword>
<keyword id="KW-1185">Reference proteome</keyword>
<keyword id="KW-0694">RNA-binding</keyword>
<keyword id="KW-0804">Transcription</keyword>
<keyword id="KW-0805">Transcription regulation</keyword>
<keyword id="KW-0806">Transcription termination</keyword>
<keyword id="KW-0808">Transferase</keyword>
<comment type="function">
    <text evidence="1">Regulates transcriptional attenuation of the pyrimidine nucleotide (pyr) operon by binding in a uridine-dependent manner to specific sites on pyr mRNA. This disrupts an antiterminator hairpin in the RNA and favors formation of a downstream transcription terminator, leading to a reduced expression of downstream genes.</text>
</comment>
<comment type="function">
    <text evidence="1">Also displays a weak uracil phosphoribosyltransferase activity which is not physiologically significant.</text>
</comment>
<comment type="catalytic activity">
    <reaction evidence="1">
        <text>UMP + diphosphate = 5-phospho-alpha-D-ribose 1-diphosphate + uracil</text>
        <dbReference type="Rhea" id="RHEA:13017"/>
        <dbReference type="ChEBI" id="CHEBI:17568"/>
        <dbReference type="ChEBI" id="CHEBI:33019"/>
        <dbReference type="ChEBI" id="CHEBI:57865"/>
        <dbReference type="ChEBI" id="CHEBI:58017"/>
        <dbReference type="EC" id="2.4.2.9"/>
    </reaction>
</comment>
<comment type="subunit">
    <text evidence="1">Homodimer and homohexamer; in equilibrium.</text>
</comment>
<comment type="similarity">
    <text evidence="1">Belongs to the purine/pyrimidine phosphoribosyltransferase family. PyrR subfamily.</text>
</comment>
<name>PYRR_OCEIH</name>
<dbReference type="EC" id="2.4.2.9" evidence="1"/>
<dbReference type="EMBL" id="BA000028">
    <property type="protein sequence ID" value="BAC13443.1"/>
    <property type="molecule type" value="Genomic_DNA"/>
</dbReference>
<dbReference type="RefSeq" id="WP_011065888.1">
    <property type="nucleotide sequence ID" value="NC_004193.1"/>
</dbReference>
<dbReference type="SMR" id="Q8CXH9"/>
<dbReference type="STRING" id="221109.gene:10733727"/>
<dbReference type="KEGG" id="oih:OB1487"/>
<dbReference type="eggNOG" id="COG2065">
    <property type="taxonomic scope" value="Bacteria"/>
</dbReference>
<dbReference type="HOGENOM" id="CLU_094234_2_1_9"/>
<dbReference type="OrthoDB" id="9802227at2"/>
<dbReference type="PhylomeDB" id="Q8CXH9"/>
<dbReference type="Proteomes" id="UP000000822">
    <property type="component" value="Chromosome"/>
</dbReference>
<dbReference type="GO" id="GO:0003723">
    <property type="term" value="F:RNA binding"/>
    <property type="evidence" value="ECO:0007669"/>
    <property type="project" value="UniProtKB-UniRule"/>
</dbReference>
<dbReference type="GO" id="GO:0004845">
    <property type="term" value="F:uracil phosphoribosyltransferase activity"/>
    <property type="evidence" value="ECO:0007669"/>
    <property type="project" value="UniProtKB-UniRule"/>
</dbReference>
<dbReference type="GO" id="GO:0006353">
    <property type="term" value="P:DNA-templated transcription termination"/>
    <property type="evidence" value="ECO:0007669"/>
    <property type="project" value="UniProtKB-UniRule"/>
</dbReference>
<dbReference type="CDD" id="cd06223">
    <property type="entry name" value="PRTases_typeI"/>
    <property type="match status" value="1"/>
</dbReference>
<dbReference type="FunFam" id="3.40.50.2020:FF:000020">
    <property type="entry name" value="Bifunctional protein PyrR"/>
    <property type="match status" value="1"/>
</dbReference>
<dbReference type="Gene3D" id="3.40.50.2020">
    <property type="match status" value="1"/>
</dbReference>
<dbReference type="HAMAP" id="MF_01219">
    <property type="entry name" value="PyrR"/>
    <property type="match status" value="1"/>
</dbReference>
<dbReference type="InterPro" id="IPR000836">
    <property type="entry name" value="PRibTrfase_dom"/>
</dbReference>
<dbReference type="InterPro" id="IPR029057">
    <property type="entry name" value="PRTase-like"/>
</dbReference>
<dbReference type="InterPro" id="IPR023050">
    <property type="entry name" value="PyrR"/>
</dbReference>
<dbReference type="InterPro" id="IPR050137">
    <property type="entry name" value="PyrR_bifunctional"/>
</dbReference>
<dbReference type="NCBIfam" id="NF003547">
    <property type="entry name" value="PRK05205.1-3"/>
    <property type="match status" value="1"/>
</dbReference>
<dbReference type="NCBIfam" id="NF003548">
    <property type="entry name" value="PRK05205.1-4"/>
    <property type="match status" value="1"/>
</dbReference>
<dbReference type="NCBIfam" id="NF003549">
    <property type="entry name" value="PRK05205.1-5"/>
    <property type="match status" value="1"/>
</dbReference>
<dbReference type="PANTHER" id="PTHR11608">
    <property type="entry name" value="BIFUNCTIONAL PROTEIN PYRR"/>
    <property type="match status" value="1"/>
</dbReference>
<dbReference type="PANTHER" id="PTHR11608:SF0">
    <property type="entry name" value="BIFUNCTIONAL PROTEIN PYRR"/>
    <property type="match status" value="1"/>
</dbReference>
<dbReference type="Pfam" id="PF00156">
    <property type="entry name" value="Pribosyltran"/>
    <property type="match status" value="1"/>
</dbReference>
<dbReference type="SUPFAM" id="SSF53271">
    <property type="entry name" value="PRTase-like"/>
    <property type="match status" value="1"/>
</dbReference>
<organism>
    <name type="scientific">Oceanobacillus iheyensis (strain DSM 14371 / CIP 107618 / JCM 11309 / KCTC 3954 / HTE831)</name>
    <dbReference type="NCBI Taxonomy" id="221109"/>
    <lineage>
        <taxon>Bacteria</taxon>
        <taxon>Bacillati</taxon>
        <taxon>Bacillota</taxon>
        <taxon>Bacilli</taxon>
        <taxon>Bacillales</taxon>
        <taxon>Bacillaceae</taxon>
        <taxon>Oceanobacillus</taxon>
    </lineage>
</organism>
<feature type="chain" id="PRO_1000073134" description="Bifunctional protein PyrR">
    <location>
        <begin position="1"/>
        <end position="180"/>
    </location>
</feature>
<feature type="short sequence motif" description="PRPP-binding" evidence="1">
    <location>
        <begin position="101"/>
        <end position="113"/>
    </location>
</feature>
<sequence length="180" mass="20245">MKKKTEILDAASIQRALTRMSHEILEKNKGGENLVLIGIKTRGVPLAKRIQQKIKQIESIEVPLGELDITMYRDDLDKVSEQEDPKINSVSIGMDITDKHVILIDDVLFTGRTVRAAMDAVMDVGRPSTIQLGSLVDRGHRELPIRADYVGKNIPTSDREIVVVQLSEQDQEDRVSLYEK</sequence>
<gene>
    <name evidence="1" type="primary">pyrR</name>
    <name type="ordered locus">OB1487</name>
</gene>